<name>NADC_METTH</name>
<dbReference type="EC" id="2.4.2.19"/>
<dbReference type="EMBL" id="AE000666">
    <property type="protein sequence ID" value="AAB86298.1"/>
    <property type="molecule type" value="Genomic_DNA"/>
</dbReference>
<dbReference type="PIR" id="A69112">
    <property type="entry name" value="A69112"/>
</dbReference>
<dbReference type="RefSeq" id="WP_010877434.1">
    <property type="nucleotide sequence ID" value="NC_000916.1"/>
</dbReference>
<dbReference type="SMR" id="O27860"/>
<dbReference type="FunCoup" id="O27860">
    <property type="interactions" value="138"/>
</dbReference>
<dbReference type="STRING" id="187420.MTH_1832"/>
<dbReference type="PaxDb" id="187420-MTH_1832"/>
<dbReference type="EnsemblBacteria" id="AAB86298">
    <property type="protein sequence ID" value="AAB86298"/>
    <property type="gene ID" value="MTH_1832"/>
</dbReference>
<dbReference type="GeneID" id="1470917"/>
<dbReference type="GeneID" id="77402344"/>
<dbReference type="KEGG" id="mth:MTH_1832"/>
<dbReference type="PATRIC" id="fig|187420.15.peg.1786"/>
<dbReference type="HOGENOM" id="CLU_039622_2_0_2"/>
<dbReference type="InParanoid" id="O27860"/>
<dbReference type="UniPathway" id="UPA00253">
    <property type="reaction ID" value="UER00331"/>
</dbReference>
<dbReference type="Proteomes" id="UP000005223">
    <property type="component" value="Chromosome"/>
</dbReference>
<dbReference type="GO" id="GO:0005737">
    <property type="term" value="C:cytoplasm"/>
    <property type="evidence" value="ECO:0007669"/>
    <property type="project" value="TreeGrafter"/>
</dbReference>
<dbReference type="GO" id="GO:0004514">
    <property type="term" value="F:nicotinate-nucleotide diphosphorylase (carboxylating) activity"/>
    <property type="evidence" value="ECO:0007669"/>
    <property type="project" value="UniProtKB-EC"/>
</dbReference>
<dbReference type="GO" id="GO:0009435">
    <property type="term" value="P:NAD biosynthetic process"/>
    <property type="evidence" value="ECO:0007669"/>
    <property type="project" value="UniProtKB-UniPathway"/>
</dbReference>
<dbReference type="GO" id="GO:0034213">
    <property type="term" value="P:quinolinate catabolic process"/>
    <property type="evidence" value="ECO:0007669"/>
    <property type="project" value="TreeGrafter"/>
</dbReference>
<dbReference type="CDD" id="cd01572">
    <property type="entry name" value="QPRTase"/>
    <property type="match status" value="1"/>
</dbReference>
<dbReference type="FunFam" id="3.90.1170.20:FF:000001">
    <property type="entry name" value="Nicotinate-nucleotide diphosphorylase (Carboxylating)"/>
    <property type="match status" value="1"/>
</dbReference>
<dbReference type="FunFam" id="3.20.20.70:FF:000030">
    <property type="entry name" value="Nicotinate-nucleotide pyrophosphorylase, carboxylating"/>
    <property type="match status" value="1"/>
</dbReference>
<dbReference type="Gene3D" id="3.20.20.70">
    <property type="entry name" value="Aldolase class I"/>
    <property type="match status" value="1"/>
</dbReference>
<dbReference type="Gene3D" id="3.90.1170.20">
    <property type="entry name" value="Quinolinate phosphoribosyl transferase, N-terminal domain"/>
    <property type="match status" value="1"/>
</dbReference>
<dbReference type="InterPro" id="IPR013785">
    <property type="entry name" value="Aldolase_TIM"/>
</dbReference>
<dbReference type="InterPro" id="IPR004393">
    <property type="entry name" value="NadC"/>
</dbReference>
<dbReference type="InterPro" id="IPR027277">
    <property type="entry name" value="NadC/ModD"/>
</dbReference>
<dbReference type="InterPro" id="IPR036068">
    <property type="entry name" value="Nicotinate_pribotase-like_C"/>
</dbReference>
<dbReference type="InterPro" id="IPR037128">
    <property type="entry name" value="Quinolinate_PRibosylTase_N_sf"/>
</dbReference>
<dbReference type="InterPro" id="IPR002638">
    <property type="entry name" value="Quinolinate_PRibosylTrfase_C"/>
</dbReference>
<dbReference type="InterPro" id="IPR022412">
    <property type="entry name" value="Quinolinate_PRibosylTrfase_N"/>
</dbReference>
<dbReference type="NCBIfam" id="TIGR00078">
    <property type="entry name" value="nadC"/>
    <property type="match status" value="1"/>
</dbReference>
<dbReference type="PANTHER" id="PTHR32179">
    <property type="entry name" value="NICOTINATE-NUCLEOTIDE PYROPHOSPHORYLASE [CARBOXYLATING]"/>
    <property type="match status" value="1"/>
</dbReference>
<dbReference type="PANTHER" id="PTHR32179:SF3">
    <property type="entry name" value="NICOTINATE-NUCLEOTIDE PYROPHOSPHORYLASE [CARBOXYLATING]"/>
    <property type="match status" value="1"/>
</dbReference>
<dbReference type="Pfam" id="PF01729">
    <property type="entry name" value="QRPTase_C"/>
    <property type="match status" value="1"/>
</dbReference>
<dbReference type="Pfam" id="PF02749">
    <property type="entry name" value="QRPTase_N"/>
    <property type="match status" value="1"/>
</dbReference>
<dbReference type="PIRSF" id="PIRSF006250">
    <property type="entry name" value="NadC_ModD"/>
    <property type="match status" value="1"/>
</dbReference>
<dbReference type="SUPFAM" id="SSF51690">
    <property type="entry name" value="Nicotinate/Quinolinate PRTase C-terminal domain-like"/>
    <property type="match status" value="1"/>
</dbReference>
<dbReference type="SUPFAM" id="SSF54675">
    <property type="entry name" value="Nicotinate/Quinolinate PRTase N-terminal domain-like"/>
    <property type="match status" value="1"/>
</dbReference>
<evidence type="ECO:0000250" key="1"/>
<evidence type="ECO:0000305" key="2"/>
<comment type="function">
    <text evidence="1">Involved in the catabolism of quinolinic acid (QA).</text>
</comment>
<comment type="catalytic activity">
    <reaction>
        <text>nicotinate beta-D-ribonucleotide + CO2 + diphosphate = quinolinate + 5-phospho-alpha-D-ribose 1-diphosphate + 2 H(+)</text>
        <dbReference type="Rhea" id="RHEA:12733"/>
        <dbReference type="ChEBI" id="CHEBI:15378"/>
        <dbReference type="ChEBI" id="CHEBI:16526"/>
        <dbReference type="ChEBI" id="CHEBI:29959"/>
        <dbReference type="ChEBI" id="CHEBI:33019"/>
        <dbReference type="ChEBI" id="CHEBI:57502"/>
        <dbReference type="ChEBI" id="CHEBI:58017"/>
        <dbReference type="EC" id="2.4.2.19"/>
    </reaction>
</comment>
<comment type="pathway">
    <text>Cofactor biosynthesis; NAD(+) biosynthesis; nicotinate D-ribonucleotide from quinolinate: step 1/1.</text>
</comment>
<comment type="subunit">
    <text evidence="1">Hexamer formed by 3 homodimers.</text>
</comment>
<comment type="similarity">
    <text evidence="2">Belongs to the NadC/ModD family.</text>
</comment>
<sequence length="279" mass="30806">MMDIIREMIRADVGFEDITTEALIDRGTRVVADIVSREEGVVAGVEVAEMMAREFSISIIRWKDDGDPLSGGERVLTLEGDAMDILMVERTMLNLMMKMSGIATLTRSMLQRARAVNEGIRIAATRKTTPGLQWFEKQAVRIGGGDTHRFRLDDCAMIKDNHIAIVGNIEDAVRRVRDHVSFTKKVEVEVESPDDAVRAAEAGADIVLLDNMSPETIRNTLEELERRGLRDNVIVEASGGIKPDNIELYASTGVEVISMGFITASAHPVDLSLEIRGLK</sequence>
<gene>
    <name type="primary">nadC</name>
    <name type="ordered locus">MTH_1832</name>
</gene>
<accession>O27860</accession>
<protein>
    <recommendedName>
        <fullName>Probable nicotinate-nucleotide pyrophosphorylase [carboxylating]</fullName>
        <ecNumber>2.4.2.19</ecNumber>
    </recommendedName>
    <alternativeName>
        <fullName>Quinolinate phosphoribosyltransferase [decarboxylating]</fullName>
        <shortName>QAPRTase</shortName>
    </alternativeName>
</protein>
<keyword id="KW-0328">Glycosyltransferase</keyword>
<keyword id="KW-0662">Pyridine nucleotide biosynthesis</keyword>
<keyword id="KW-1185">Reference proteome</keyword>
<keyword id="KW-0808">Transferase</keyword>
<feature type="chain" id="PRO_0000155953" description="Probable nicotinate-nucleotide pyrophosphorylase [carboxylating]">
    <location>
        <begin position="1"/>
        <end position="279"/>
    </location>
</feature>
<feature type="binding site" evidence="1">
    <location>
        <position position="90"/>
    </location>
    <ligand>
        <name>substrate</name>
    </ligand>
</feature>
<feature type="binding site" evidence="1">
    <location>
        <begin position="125"/>
        <end position="127"/>
    </location>
    <ligand>
        <name>substrate</name>
    </ligand>
</feature>
<feature type="binding site" evidence="1">
    <location>
        <position position="149"/>
    </location>
    <ligand>
        <name>substrate</name>
    </ligand>
</feature>
<feature type="binding site" evidence="1">
    <location>
        <position position="159"/>
    </location>
    <ligand>
        <name>substrate</name>
    </ligand>
</feature>
<feature type="binding site" evidence="1">
    <location>
        <position position="189"/>
    </location>
    <ligand>
        <name>substrate</name>
    </ligand>
</feature>
<feature type="binding site" evidence="1">
    <location>
        <position position="210"/>
    </location>
    <ligand>
        <name>substrate</name>
    </ligand>
</feature>
<feature type="binding site" evidence="1">
    <location>
        <begin position="238"/>
        <end position="240"/>
    </location>
    <ligand>
        <name>substrate</name>
    </ligand>
</feature>
<feature type="binding site" evidence="1">
    <location>
        <begin position="259"/>
        <end position="261"/>
    </location>
    <ligand>
        <name>substrate</name>
    </ligand>
</feature>
<organism>
    <name type="scientific">Methanothermobacter thermautotrophicus (strain ATCC 29096 / DSM 1053 / JCM 10044 / NBRC 100330 / Delta H)</name>
    <name type="common">Methanobacterium thermoautotrophicum</name>
    <dbReference type="NCBI Taxonomy" id="187420"/>
    <lineage>
        <taxon>Archaea</taxon>
        <taxon>Methanobacteriati</taxon>
        <taxon>Methanobacteriota</taxon>
        <taxon>Methanomada group</taxon>
        <taxon>Methanobacteria</taxon>
        <taxon>Methanobacteriales</taxon>
        <taxon>Methanobacteriaceae</taxon>
        <taxon>Methanothermobacter</taxon>
    </lineage>
</organism>
<proteinExistence type="inferred from homology"/>
<reference key="1">
    <citation type="journal article" date="1997" name="J. Bacteriol.">
        <title>Complete genome sequence of Methanobacterium thermoautotrophicum deltaH: functional analysis and comparative genomics.</title>
        <authorList>
            <person name="Smith D.R."/>
            <person name="Doucette-Stamm L.A."/>
            <person name="Deloughery C."/>
            <person name="Lee H.-M."/>
            <person name="Dubois J."/>
            <person name="Aldredge T."/>
            <person name="Bashirzadeh R."/>
            <person name="Blakely D."/>
            <person name="Cook R."/>
            <person name="Gilbert K."/>
            <person name="Harrison D."/>
            <person name="Hoang L."/>
            <person name="Keagle P."/>
            <person name="Lumm W."/>
            <person name="Pothier B."/>
            <person name="Qiu D."/>
            <person name="Spadafora R."/>
            <person name="Vicare R."/>
            <person name="Wang Y."/>
            <person name="Wierzbowski J."/>
            <person name="Gibson R."/>
            <person name="Jiwani N."/>
            <person name="Caruso A."/>
            <person name="Bush D."/>
            <person name="Safer H."/>
            <person name="Patwell D."/>
            <person name="Prabhakar S."/>
            <person name="McDougall S."/>
            <person name="Shimer G."/>
            <person name="Goyal A."/>
            <person name="Pietrovski S."/>
            <person name="Church G.M."/>
            <person name="Daniels C.J."/>
            <person name="Mao J.-I."/>
            <person name="Rice P."/>
            <person name="Noelling J."/>
            <person name="Reeve J.N."/>
        </authorList>
    </citation>
    <scope>NUCLEOTIDE SEQUENCE [LARGE SCALE GENOMIC DNA]</scope>
    <source>
        <strain>ATCC 29096 / DSM 1053 / JCM 10044 / NBRC 100330 / Delta H</strain>
    </source>
</reference>